<gene>
    <name evidence="1" type="primary">rpiA</name>
    <name type="ordered locus">Mmwyl1_4136</name>
</gene>
<evidence type="ECO:0000255" key="1">
    <source>
        <dbReference type="HAMAP-Rule" id="MF_00170"/>
    </source>
</evidence>
<dbReference type="EC" id="5.3.1.6" evidence="1"/>
<dbReference type="EMBL" id="CP000749">
    <property type="protein sequence ID" value="ABR73032.1"/>
    <property type="molecule type" value="Genomic_DNA"/>
</dbReference>
<dbReference type="SMR" id="A6W2V3"/>
<dbReference type="STRING" id="400668.Mmwyl1_4136"/>
<dbReference type="KEGG" id="mmw:Mmwyl1_4136"/>
<dbReference type="eggNOG" id="COG0120">
    <property type="taxonomic scope" value="Bacteria"/>
</dbReference>
<dbReference type="HOGENOM" id="CLU_056590_1_1_6"/>
<dbReference type="OrthoDB" id="5870696at2"/>
<dbReference type="UniPathway" id="UPA00115">
    <property type="reaction ID" value="UER00412"/>
</dbReference>
<dbReference type="GO" id="GO:0005829">
    <property type="term" value="C:cytosol"/>
    <property type="evidence" value="ECO:0007669"/>
    <property type="project" value="TreeGrafter"/>
</dbReference>
<dbReference type="GO" id="GO:0004751">
    <property type="term" value="F:ribose-5-phosphate isomerase activity"/>
    <property type="evidence" value="ECO:0007669"/>
    <property type="project" value="UniProtKB-UniRule"/>
</dbReference>
<dbReference type="GO" id="GO:0006014">
    <property type="term" value="P:D-ribose metabolic process"/>
    <property type="evidence" value="ECO:0007669"/>
    <property type="project" value="TreeGrafter"/>
</dbReference>
<dbReference type="GO" id="GO:0009052">
    <property type="term" value="P:pentose-phosphate shunt, non-oxidative branch"/>
    <property type="evidence" value="ECO:0007669"/>
    <property type="project" value="UniProtKB-UniRule"/>
</dbReference>
<dbReference type="CDD" id="cd01398">
    <property type="entry name" value="RPI_A"/>
    <property type="match status" value="1"/>
</dbReference>
<dbReference type="FunFam" id="3.30.70.260:FF:000004">
    <property type="entry name" value="Ribose-5-phosphate isomerase A"/>
    <property type="match status" value="1"/>
</dbReference>
<dbReference type="FunFam" id="3.40.50.1360:FF:000001">
    <property type="entry name" value="Ribose-5-phosphate isomerase A"/>
    <property type="match status" value="1"/>
</dbReference>
<dbReference type="Gene3D" id="3.30.70.260">
    <property type="match status" value="1"/>
</dbReference>
<dbReference type="Gene3D" id="3.40.50.1360">
    <property type="match status" value="1"/>
</dbReference>
<dbReference type="HAMAP" id="MF_00170">
    <property type="entry name" value="Rib_5P_isom_A"/>
    <property type="match status" value="1"/>
</dbReference>
<dbReference type="InterPro" id="IPR037171">
    <property type="entry name" value="NagB/RpiA_transferase-like"/>
</dbReference>
<dbReference type="InterPro" id="IPR020672">
    <property type="entry name" value="Ribose5P_isomerase_typA_subgr"/>
</dbReference>
<dbReference type="InterPro" id="IPR004788">
    <property type="entry name" value="Ribose5P_isomerase_type_A"/>
</dbReference>
<dbReference type="NCBIfam" id="NF001924">
    <property type="entry name" value="PRK00702.1"/>
    <property type="match status" value="1"/>
</dbReference>
<dbReference type="NCBIfam" id="TIGR00021">
    <property type="entry name" value="rpiA"/>
    <property type="match status" value="1"/>
</dbReference>
<dbReference type="PANTHER" id="PTHR11934">
    <property type="entry name" value="RIBOSE-5-PHOSPHATE ISOMERASE"/>
    <property type="match status" value="1"/>
</dbReference>
<dbReference type="PANTHER" id="PTHR11934:SF0">
    <property type="entry name" value="RIBOSE-5-PHOSPHATE ISOMERASE"/>
    <property type="match status" value="1"/>
</dbReference>
<dbReference type="Pfam" id="PF06026">
    <property type="entry name" value="Rib_5-P_isom_A"/>
    <property type="match status" value="1"/>
</dbReference>
<dbReference type="SUPFAM" id="SSF75445">
    <property type="entry name" value="D-ribose-5-phosphate isomerase (RpiA), lid domain"/>
    <property type="match status" value="1"/>
</dbReference>
<dbReference type="SUPFAM" id="SSF100950">
    <property type="entry name" value="NagB/RpiA/CoA transferase-like"/>
    <property type="match status" value="1"/>
</dbReference>
<reference key="1">
    <citation type="submission" date="2007-06" db="EMBL/GenBank/DDBJ databases">
        <title>Complete sequence of Marinomonas sp. MWYL1.</title>
        <authorList>
            <consortium name="US DOE Joint Genome Institute"/>
            <person name="Copeland A."/>
            <person name="Lucas S."/>
            <person name="Lapidus A."/>
            <person name="Barry K."/>
            <person name="Glavina del Rio T."/>
            <person name="Dalin E."/>
            <person name="Tice H."/>
            <person name="Pitluck S."/>
            <person name="Kiss H."/>
            <person name="Brettin T."/>
            <person name="Bruce D."/>
            <person name="Detter J.C."/>
            <person name="Han C."/>
            <person name="Schmutz J."/>
            <person name="Larimer F."/>
            <person name="Land M."/>
            <person name="Hauser L."/>
            <person name="Kyrpides N."/>
            <person name="Kim E."/>
            <person name="Johnston A.W.B."/>
            <person name="Todd J.D."/>
            <person name="Rogers R."/>
            <person name="Wexler M."/>
            <person name="Bond P.L."/>
            <person name="Li Y."/>
            <person name="Richardson P."/>
        </authorList>
    </citation>
    <scope>NUCLEOTIDE SEQUENCE [LARGE SCALE GENOMIC DNA]</scope>
    <source>
        <strain>MWYL1</strain>
    </source>
</reference>
<name>RPIA_MARMS</name>
<sequence length="223" mass="23795">MTQDELKQAVAKAAMAYIQPMLEADTIVGVGTGSTANLFIDELAKHKGLFDGTVASSEASAERLKKHGIPVYDLNSVDSIRVYVDGADESNDNLHLIKGGGAALTREKIVAACSDEFVCIADESKLVKVLGDFPLPVEIIPMARGHVARELVKLGGDPVYREGVVTDNGNHILDVYNLEILDPIALEKSIDGIVGVVTNGLFAKRSADVLLLATKEGIKTLKK</sequence>
<protein>
    <recommendedName>
        <fullName evidence="1">Ribose-5-phosphate isomerase A</fullName>
        <ecNumber evidence="1">5.3.1.6</ecNumber>
    </recommendedName>
    <alternativeName>
        <fullName evidence="1">Phosphoriboisomerase A</fullName>
        <shortName evidence="1">PRI</shortName>
    </alternativeName>
</protein>
<feature type="chain" id="PRO_1000077069" description="Ribose-5-phosphate isomerase A">
    <location>
        <begin position="1"/>
        <end position="223"/>
    </location>
</feature>
<feature type="active site" description="Proton acceptor" evidence="1">
    <location>
        <position position="107"/>
    </location>
</feature>
<feature type="binding site" evidence="1">
    <location>
        <begin position="32"/>
        <end position="35"/>
    </location>
    <ligand>
        <name>substrate</name>
    </ligand>
</feature>
<feature type="binding site" evidence="1">
    <location>
        <begin position="85"/>
        <end position="88"/>
    </location>
    <ligand>
        <name>substrate</name>
    </ligand>
</feature>
<feature type="binding site" evidence="1">
    <location>
        <begin position="98"/>
        <end position="101"/>
    </location>
    <ligand>
        <name>substrate</name>
    </ligand>
</feature>
<feature type="binding site" evidence="1">
    <location>
        <position position="125"/>
    </location>
    <ligand>
        <name>substrate</name>
    </ligand>
</feature>
<accession>A6W2V3</accession>
<organism>
    <name type="scientific">Marinomonas sp. (strain MWYL1)</name>
    <dbReference type="NCBI Taxonomy" id="400668"/>
    <lineage>
        <taxon>Bacteria</taxon>
        <taxon>Pseudomonadati</taxon>
        <taxon>Pseudomonadota</taxon>
        <taxon>Gammaproteobacteria</taxon>
        <taxon>Oceanospirillales</taxon>
        <taxon>Oceanospirillaceae</taxon>
        <taxon>Marinomonas</taxon>
    </lineage>
</organism>
<proteinExistence type="inferred from homology"/>
<keyword id="KW-0413">Isomerase</keyword>
<comment type="function">
    <text evidence="1">Catalyzes the reversible conversion of ribose-5-phosphate to ribulose 5-phosphate.</text>
</comment>
<comment type="catalytic activity">
    <reaction evidence="1">
        <text>aldehydo-D-ribose 5-phosphate = D-ribulose 5-phosphate</text>
        <dbReference type="Rhea" id="RHEA:14657"/>
        <dbReference type="ChEBI" id="CHEBI:58121"/>
        <dbReference type="ChEBI" id="CHEBI:58273"/>
        <dbReference type="EC" id="5.3.1.6"/>
    </reaction>
</comment>
<comment type="pathway">
    <text evidence="1">Carbohydrate degradation; pentose phosphate pathway; D-ribose 5-phosphate from D-ribulose 5-phosphate (non-oxidative stage): step 1/1.</text>
</comment>
<comment type="subunit">
    <text evidence="1">Homodimer.</text>
</comment>
<comment type="similarity">
    <text evidence="1">Belongs to the ribose 5-phosphate isomerase family.</text>
</comment>